<keyword id="KW-0967">Endosome</keyword>
<keyword id="KW-0342">GTP-binding</keyword>
<keyword id="KW-0945">Host-virus interaction</keyword>
<keyword id="KW-0442">Lipid degradation</keyword>
<keyword id="KW-0443">Lipid metabolism</keyword>
<keyword id="KW-0449">Lipoprotein</keyword>
<keyword id="KW-0458">Lysosome</keyword>
<keyword id="KW-0472">Membrane</keyword>
<keyword id="KW-0488">Methylation</keyword>
<keyword id="KW-0547">Nucleotide-binding</keyword>
<keyword id="KW-0636">Prenylation</keyword>
<keyword id="KW-0653">Protein transport</keyword>
<keyword id="KW-0813">Transport</keyword>
<protein>
    <recommendedName>
        <fullName evidence="4">Ras-related protein rab7</fullName>
    </recommendedName>
</protein>
<dbReference type="EMBL" id="JQ085431">
    <property type="protein sequence ID" value="AFD97434.1"/>
    <property type="molecule type" value="mRNA"/>
</dbReference>
<dbReference type="SMR" id="H9BW96"/>
<dbReference type="GO" id="GO:0010008">
    <property type="term" value="C:endosome membrane"/>
    <property type="evidence" value="ECO:0000250"/>
    <property type="project" value="UniProtKB"/>
</dbReference>
<dbReference type="GO" id="GO:0005770">
    <property type="term" value="C:late endosome"/>
    <property type="evidence" value="ECO:0000250"/>
    <property type="project" value="UniProtKB"/>
</dbReference>
<dbReference type="GO" id="GO:0031902">
    <property type="term" value="C:late endosome membrane"/>
    <property type="evidence" value="ECO:0007669"/>
    <property type="project" value="UniProtKB-SubCell"/>
</dbReference>
<dbReference type="GO" id="GO:0005765">
    <property type="term" value="C:lysosomal membrane"/>
    <property type="evidence" value="ECO:0000314"/>
    <property type="project" value="UniProtKB"/>
</dbReference>
<dbReference type="GO" id="GO:0045335">
    <property type="term" value="C:phagocytic vesicle"/>
    <property type="evidence" value="ECO:0007669"/>
    <property type="project" value="TreeGrafter"/>
</dbReference>
<dbReference type="GO" id="GO:0005525">
    <property type="term" value="F:GTP binding"/>
    <property type="evidence" value="ECO:0007669"/>
    <property type="project" value="UniProtKB-KW"/>
</dbReference>
<dbReference type="GO" id="GO:0003924">
    <property type="term" value="F:GTPase activity"/>
    <property type="evidence" value="ECO:0000250"/>
    <property type="project" value="UniProtKB"/>
</dbReference>
<dbReference type="GO" id="GO:0045022">
    <property type="term" value="P:early endosome to late endosome transport"/>
    <property type="evidence" value="ECO:0000250"/>
    <property type="project" value="UniProtKB"/>
</dbReference>
<dbReference type="GO" id="GO:0008333">
    <property type="term" value="P:endosome to lysosome transport"/>
    <property type="evidence" value="ECO:0000250"/>
    <property type="project" value="UniProtKB"/>
</dbReference>
<dbReference type="GO" id="GO:0016042">
    <property type="term" value="P:lipid catabolic process"/>
    <property type="evidence" value="ECO:0007669"/>
    <property type="project" value="UniProtKB-KW"/>
</dbReference>
<dbReference type="GO" id="GO:0090385">
    <property type="term" value="P:phagosome-lysosome fusion"/>
    <property type="evidence" value="ECO:0007669"/>
    <property type="project" value="TreeGrafter"/>
</dbReference>
<dbReference type="GO" id="GO:0045732">
    <property type="term" value="P:positive regulation of protein catabolic process"/>
    <property type="evidence" value="ECO:0000250"/>
    <property type="project" value="UniProtKB"/>
</dbReference>
<dbReference type="GO" id="GO:0048524">
    <property type="term" value="P:positive regulation of viral process"/>
    <property type="evidence" value="ECO:0000250"/>
    <property type="project" value="UniProtKB"/>
</dbReference>
<dbReference type="GO" id="GO:0006622">
    <property type="term" value="P:protein targeting to lysosome"/>
    <property type="evidence" value="ECO:0000250"/>
    <property type="project" value="UniProtKB"/>
</dbReference>
<dbReference type="CDD" id="cd01862">
    <property type="entry name" value="Rab7"/>
    <property type="match status" value="1"/>
</dbReference>
<dbReference type="FunFam" id="3.40.50.300:FF:000086">
    <property type="entry name" value="Ras-related small GTPase"/>
    <property type="match status" value="1"/>
</dbReference>
<dbReference type="Gene3D" id="3.40.50.300">
    <property type="entry name" value="P-loop containing nucleotide triphosphate hydrolases"/>
    <property type="match status" value="1"/>
</dbReference>
<dbReference type="InterPro" id="IPR027417">
    <property type="entry name" value="P-loop_NTPase"/>
</dbReference>
<dbReference type="InterPro" id="IPR005225">
    <property type="entry name" value="Small_GTP-bd"/>
</dbReference>
<dbReference type="InterPro" id="IPR001806">
    <property type="entry name" value="Small_GTPase"/>
</dbReference>
<dbReference type="NCBIfam" id="TIGR00231">
    <property type="entry name" value="small_GTP"/>
    <property type="match status" value="1"/>
</dbReference>
<dbReference type="PANTHER" id="PTHR47981">
    <property type="entry name" value="RAB FAMILY"/>
    <property type="match status" value="1"/>
</dbReference>
<dbReference type="PANTHER" id="PTHR47981:SF13">
    <property type="entry name" value="RAS-RELATED PROTEIN RAB-7A"/>
    <property type="match status" value="1"/>
</dbReference>
<dbReference type="Pfam" id="PF00071">
    <property type="entry name" value="Ras"/>
    <property type="match status" value="1"/>
</dbReference>
<dbReference type="PRINTS" id="PR00449">
    <property type="entry name" value="RASTRNSFRMNG"/>
</dbReference>
<dbReference type="SMART" id="SM00175">
    <property type="entry name" value="RAB"/>
    <property type="match status" value="1"/>
</dbReference>
<dbReference type="SMART" id="SM00176">
    <property type="entry name" value="RAN"/>
    <property type="match status" value="1"/>
</dbReference>
<dbReference type="SMART" id="SM00173">
    <property type="entry name" value="RAS"/>
    <property type="match status" value="1"/>
</dbReference>
<dbReference type="SMART" id="SM00174">
    <property type="entry name" value="RHO"/>
    <property type="match status" value="1"/>
</dbReference>
<dbReference type="SUPFAM" id="SSF52540">
    <property type="entry name" value="P-loop containing nucleoside triphosphate hydrolases"/>
    <property type="match status" value="1"/>
</dbReference>
<dbReference type="PROSITE" id="PS51419">
    <property type="entry name" value="RAB"/>
    <property type="match status" value="1"/>
</dbReference>
<gene>
    <name evidence="3" type="primary">rab7</name>
</gene>
<accession>H9BW96</accession>
<evidence type="ECO:0000250" key="1">
    <source>
        <dbReference type="UniProtKB" id="P51149"/>
    </source>
</evidence>
<evidence type="ECO:0000269" key="2">
    <source>
    </source>
</evidence>
<evidence type="ECO:0000303" key="3">
    <source>
    </source>
</evidence>
<evidence type="ECO:0000305" key="4"/>
<evidence type="ECO:0000312" key="5">
    <source>
        <dbReference type="EMBL" id="AFD97434.1"/>
    </source>
</evidence>
<organism evidence="5">
    <name type="scientific">Epinephelus coioides</name>
    <name type="common">Orange-spotted grouper</name>
    <name type="synonym">Epinephelus nebulosus</name>
    <dbReference type="NCBI Taxonomy" id="94232"/>
    <lineage>
        <taxon>Eukaryota</taxon>
        <taxon>Metazoa</taxon>
        <taxon>Chordata</taxon>
        <taxon>Craniata</taxon>
        <taxon>Vertebrata</taxon>
        <taxon>Euteleostomi</taxon>
        <taxon>Actinopterygii</taxon>
        <taxon>Neopterygii</taxon>
        <taxon>Teleostei</taxon>
        <taxon>Neoteleostei</taxon>
        <taxon>Acanthomorphata</taxon>
        <taxon>Eupercaria</taxon>
        <taxon>Perciformes</taxon>
        <taxon>Serranoidei</taxon>
        <taxon>Serranidae</taxon>
        <taxon>Epinephelinae</taxon>
        <taxon>Epinephelini</taxon>
        <taxon>Epinephelus</taxon>
    </lineage>
</organism>
<proteinExistence type="evidence at protein level"/>
<reference evidence="5" key="1">
    <citation type="journal article" date="2014" name="Fish Shellfish Immunol.">
        <title>Identification and characterization of Rab7 from orange-spotted grouper, Epinephelus coioides.</title>
        <authorList>
            <person name="Fu J."/>
            <person name="Huang Y."/>
            <person name="Cai J."/>
            <person name="Wei S."/>
            <person name="Ouyang Z."/>
            <person name="Ye F."/>
            <person name="Huang X."/>
            <person name="Qin Q."/>
        </authorList>
    </citation>
    <scope>NUCLEOTIDE SEQUENCE [MRNA]</scope>
    <scope>INTERACTION WITH VIRAL PROTEINS</scope>
    <scope>SUBCELLULAR LOCATION</scope>
    <scope>TISSUE SPECIFICITY</scope>
    <scope>INDUCTION</scope>
    <scope>ISOPRENYLATION AT CYS-205 AND CYS-207</scope>
    <scope>PHYLOGENETIC ANALYSIS</scope>
</reference>
<name>RAB7_EPICO</name>
<sequence>MTSRKKVLLKVIILGDSGVGKTSLMNQYVNKKFSNQYKATIGADFLTKEVMVDDRLVTMQIWDTAGQERFQSLGVAFYRGADCCVLVFDVTAPNTFKTLDSWRDEFLIQASPRDPENFPFVVLGNKIDLENRQVTTKRAQAWCQSKNNIPYFETSAKEAINVEQAFQTIARNALKQETEVELYNEFPEPIKLDRNERAKPSAETCSC</sequence>
<feature type="chain" id="PRO_0000438075" description="Ras-related protein rab7">
    <location>
        <begin position="1"/>
        <end position="207"/>
    </location>
</feature>
<feature type="short sequence motif" description="Effector region" evidence="4">
    <location>
        <begin position="37"/>
        <end position="45"/>
    </location>
</feature>
<feature type="binding site" evidence="1">
    <location>
        <begin position="15"/>
        <end position="22"/>
    </location>
    <ligand>
        <name>GTP</name>
        <dbReference type="ChEBI" id="CHEBI:37565"/>
    </ligand>
</feature>
<feature type="binding site" evidence="1">
    <location>
        <begin position="34"/>
        <end position="40"/>
    </location>
    <ligand>
        <name>GTP</name>
        <dbReference type="ChEBI" id="CHEBI:37565"/>
    </ligand>
</feature>
<feature type="binding site" evidence="1">
    <location>
        <begin position="63"/>
        <end position="67"/>
    </location>
    <ligand>
        <name>GTP</name>
        <dbReference type="ChEBI" id="CHEBI:37565"/>
    </ligand>
</feature>
<feature type="binding site" evidence="1">
    <location>
        <begin position="125"/>
        <end position="128"/>
    </location>
    <ligand>
        <name>GTP</name>
        <dbReference type="ChEBI" id="CHEBI:37565"/>
    </ligand>
</feature>
<feature type="binding site" evidence="1">
    <location>
        <begin position="156"/>
        <end position="157"/>
    </location>
    <ligand>
        <name>GTP</name>
        <dbReference type="ChEBI" id="CHEBI:37565"/>
    </ligand>
</feature>
<feature type="modified residue" description="Cysteine methyl ester" evidence="4">
    <location>
        <position position="207"/>
    </location>
</feature>
<feature type="lipid moiety-binding region" description="S-geranylgeranyl cysteine" evidence="3">
    <location>
        <position position="205"/>
    </location>
</feature>
<feature type="lipid moiety-binding region" description="S-geranylgeranyl cysteine" evidence="3">
    <location>
        <position position="207"/>
    </location>
</feature>
<comment type="function">
    <text evidence="1">Key regulator in endo-lysosomal trafficking. Governs early-to-late endosomal maturation, microtubule minus-end as well as plus-end directed endosomal migration and positioning, and endosome-lysosome transport through different protein-protein interaction cascades. Plays important roles in microbial pathogen infection and survival, as well as in participating in the life cycle of viruses (By similarity).</text>
</comment>
<comment type="subunit">
    <text evidence="2">(Microbial infection) Interacts with Singapore grouper iridoviral proteins VP69 (ORF69) and VP101 (ORF101).</text>
</comment>
<comment type="subcellular location">
    <subcellularLocation>
        <location evidence="1">Late endosome membrane</location>
        <topology evidence="4">Lipid-anchor</topology>
    </subcellularLocation>
    <subcellularLocation>
        <location evidence="2">Lysosome membrane</location>
        <topology evidence="4">Lipid-anchor</topology>
    </subcellularLocation>
    <text evidence="2">Aggregates into the viral factories in cells infected by Singapore grouper iridovirus (SGIV) in the late stages of the infection.</text>
</comment>
<comment type="tissue specificity">
    <text evidence="2">Ubiquitously expressed. Expressed in liver, spleen, kidney, brain, intestine, heart, skin, muscle, gill and stomach.</text>
</comment>
<comment type="induction">
    <text evidence="2">(Microbial infection) Down-regulated at 6 hours post infection, and then up-regulated until 48 hours post infection in spleen cells in response to Singapore grouper iridovirus (SGIV) infection.</text>
</comment>
<comment type="similarity">
    <text evidence="4">Belongs to the small GTPase superfamily. Rab family.</text>
</comment>